<name>NUOC_AROAE</name>
<organism>
    <name type="scientific">Aromatoleum aromaticum (strain DSM 19018 / LMG 30748 / EbN1)</name>
    <name type="common">Azoarcus sp. (strain EbN1)</name>
    <dbReference type="NCBI Taxonomy" id="76114"/>
    <lineage>
        <taxon>Bacteria</taxon>
        <taxon>Pseudomonadati</taxon>
        <taxon>Pseudomonadota</taxon>
        <taxon>Betaproteobacteria</taxon>
        <taxon>Rhodocyclales</taxon>
        <taxon>Rhodocyclaceae</taxon>
        <taxon>Aromatoleum</taxon>
    </lineage>
</organism>
<protein>
    <recommendedName>
        <fullName evidence="1">NADH-quinone oxidoreductase subunit C</fullName>
        <ecNumber evidence="1">7.1.1.-</ecNumber>
    </recommendedName>
    <alternativeName>
        <fullName evidence="1">NADH dehydrogenase I subunit C</fullName>
    </alternativeName>
    <alternativeName>
        <fullName evidence="1">NDH-1 subunit C</fullName>
    </alternativeName>
</protein>
<reference key="1">
    <citation type="journal article" date="2005" name="Arch. Microbiol.">
        <title>The genome sequence of an anaerobic aromatic-degrading denitrifying bacterium, strain EbN1.</title>
        <authorList>
            <person name="Rabus R."/>
            <person name="Kube M."/>
            <person name="Heider J."/>
            <person name="Beck A."/>
            <person name="Heitmann K."/>
            <person name="Widdel F."/>
            <person name="Reinhardt R."/>
        </authorList>
    </citation>
    <scope>NUCLEOTIDE SEQUENCE [LARGE SCALE GENOMIC DNA]</scope>
    <source>
        <strain>DSM 19018 / LMG 30748 / EbN1</strain>
    </source>
</reference>
<keyword id="KW-0997">Cell inner membrane</keyword>
<keyword id="KW-1003">Cell membrane</keyword>
<keyword id="KW-0472">Membrane</keyword>
<keyword id="KW-0520">NAD</keyword>
<keyword id="KW-0874">Quinone</keyword>
<keyword id="KW-1185">Reference proteome</keyword>
<keyword id="KW-1278">Translocase</keyword>
<keyword id="KW-0813">Transport</keyword>
<keyword id="KW-0830">Ubiquinone</keyword>
<proteinExistence type="inferred from homology"/>
<comment type="function">
    <text evidence="1">NDH-1 shuttles electrons from NADH, via FMN and iron-sulfur (Fe-S) centers, to quinones in the respiratory chain. The immediate electron acceptor for the enzyme in this species is believed to be ubiquinone. Couples the redox reaction to proton translocation (for every two electrons transferred, four hydrogen ions are translocated across the cytoplasmic membrane), and thus conserves the redox energy in a proton gradient.</text>
</comment>
<comment type="catalytic activity">
    <reaction evidence="1">
        <text>a quinone + NADH + 5 H(+)(in) = a quinol + NAD(+) + 4 H(+)(out)</text>
        <dbReference type="Rhea" id="RHEA:57888"/>
        <dbReference type="ChEBI" id="CHEBI:15378"/>
        <dbReference type="ChEBI" id="CHEBI:24646"/>
        <dbReference type="ChEBI" id="CHEBI:57540"/>
        <dbReference type="ChEBI" id="CHEBI:57945"/>
        <dbReference type="ChEBI" id="CHEBI:132124"/>
    </reaction>
</comment>
<comment type="subunit">
    <text evidence="1">NDH-1 is composed of 14 different subunits. Subunits NuoB, C, D, E, F, and G constitute the peripheral sector of the complex.</text>
</comment>
<comment type="subcellular location">
    <subcellularLocation>
        <location evidence="1">Cell inner membrane</location>
        <topology evidence="1">Peripheral membrane protein</topology>
        <orientation evidence="1">Cytoplasmic side</orientation>
    </subcellularLocation>
</comment>
<comment type="similarity">
    <text evidence="1">Belongs to the complex I 30 kDa subunit family.</text>
</comment>
<sequence>MSSKLERLSSSLQNILGAKVRSVVVDRGEVTLEVAAADYLAAAQMLRDHRDLRFEELIDLTGLDYSAYGNGAWTGKRFAVAVHLLSLTHNWRIRLRAFADDDAFPMFESLVGVWPGVNWYEREAFDLYGLMFAGHPDLRRILTDYGFVGHPFRKDFPVSGYVEMRYDPEQGRVVYQPVTIEPRENTPRIVREENYGDVGNG</sequence>
<dbReference type="EC" id="7.1.1.-" evidence="1"/>
<dbReference type="EMBL" id="CR555306">
    <property type="protein sequence ID" value="CAI08866.1"/>
    <property type="molecule type" value="Genomic_DNA"/>
</dbReference>
<dbReference type="RefSeq" id="WP_011238549.1">
    <property type="nucleotide sequence ID" value="NC_006513.1"/>
</dbReference>
<dbReference type="SMR" id="Q5P1E8"/>
<dbReference type="STRING" id="76114.ebA4836"/>
<dbReference type="KEGG" id="eba:ebA4836"/>
<dbReference type="eggNOG" id="COG0852">
    <property type="taxonomic scope" value="Bacteria"/>
</dbReference>
<dbReference type="HOGENOM" id="CLU_042628_2_1_4"/>
<dbReference type="OrthoDB" id="9803286at2"/>
<dbReference type="Proteomes" id="UP000006552">
    <property type="component" value="Chromosome"/>
</dbReference>
<dbReference type="GO" id="GO:0005886">
    <property type="term" value="C:plasma membrane"/>
    <property type="evidence" value="ECO:0007669"/>
    <property type="project" value="UniProtKB-SubCell"/>
</dbReference>
<dbReference type="GO" id="GO:0008137">
    <property type="term" value="F:NADH dehydrogenase (ubiquinone) activity"/>
    <property type="evidence" value="ECO:0007669"/>
    <property type="project" value="InterPro"/>
</dbReference>
<dbReference type="GO" id="GO:0050136">
    <property type="term" value="F:NADH:ubiquinone reductase (non-electrogenic) activity"/>
    <property type="evidence" value="ECO:0007669"/>
    <property type="project" value="UniProtKB-UniRule"/>
</dbReference>
<dbReference type="GO" id="GO:0048038">
    <property type="term" value="F:quinone binding"/>
    <property type="evidence" value="ECO:0007669"/>
    <property type="project" value="UniProtKB-KW"/>
</dbReference>
<dbReference type="Gene3D" id="3.30.460.80">
    <property type="entry name" value="NADH:ubiquinone oxidoreductase, 30kDa subunit"/>
    <property type="match status" value="1"/>
</dbReference>
<dbReference type="HAMAP" id="MF_01357">
    <property type="entry name" value="NDH1_NuoC"/>
    <property type="match status" value="1"/>
</dbReference>
<dbReference type="InterPro" id="IPR010218">
    <property type="entry name" value="NADH_DH_suC"/>
</dbReference>
<dbReference type="InterPro" id="IPR037232">
    <property type="entry name" value="NADH_quin_OxRdtase_su_C/D-like"/>
</dbReference>
<dbReference type="InterPro" id="IPR001268">
    <property type="entry name" value="NADH_UbQ_OxRdtase_30kDa_su"/>
</dbReference>
<dbReference type="InterPro" id="IPR020396">
    <property type="entry name" value="NADH_UbQ_OxRdtase_CS"/>
</dbReference>
<dbReference type="NCBIfam" id="TIGR01961">
    <property type="entry name" value="NuoC_fam"/>
    <property type="match status" value="1"/>
</dbReference>
<dbReference type="NCBIfam" id="NF004730">
    <property type="entry name" value="PRK06074.1-1"/>
    <property type="match status" value="1"/>
</dbReference>
<dbReference type="PANTHER" id="PTHR10884:SF14">
    <property type="entry name" value="NADH DEHYDROGENASE [UBIQUINONE] IRON-SULFUR PROTEIN 3, MITOCHONDRIAL"/>
    <property type="match status" value="1"/>
</dbReference>
<dbReference type="PANTHER" id="PTHR10884">
    <property type="entry name" value="NADH DEHYDROGENASE UBIQUINONE IRON-SULFUR PROTEIN 3"/>
    <property type="match status" value="1"/>
</dbReference>
<dbReference type="Pfam" id="PF00329">
    <property type="entry name" value="Complex1_30kDa"/>
    <property type="match status" value="1"/>
</dbReference>
<dbReference type="SUPFAM" id="SSF143243">
    <property type="entry name" value="Nqo5-like"/>
    <property type="match status" value="1"/>
</dbReference>
<dbReference type="PROSITE" id="PS00542">
    <property type="entry name" value="COMPLEX1_30K"/>
    <property type="match status" value="1"/>
</dbReference>
<evidence type="ECO:0000255" key="1">
    <source>
        <dbReference type="HAMAP-Rule" id="MF_01357"/>
    </source>
</evidence>
<feature type="chain" id="PRO_0000358039" description="NADH-quinone oxidoreductase subunit C">
    <location>
        <begin position="1"/>
        <end position="201"/>
    </location>
</feature>
<gene>
    <name evidence="1" type="primary">nuoC</name>
    <name type="ordered locus">AZOSEA27410</name>
    <name type="ORF">ebA4836</name>
</gene>
<accession>Q5P1E8</accession>